<dbReference type="EC" id="6.1.1.20" evidence="1"/>
<dbReference type="EMBL" id="AE014295">
    <property type="protein sequence ID" value="AAN24875.1"/>
    <property type="molecule type" value="Genomic_DNA"/>
</dbReference>
<dbReference type="RefSeq" id="NP_696239.1">
    <property type="nucleotide sequence ID" value="NC_004307.2"/>
</dbReference>
<dbReference type="SMR" id="Q8G5E7"/>
<dbReference type="STRING" id="206672.BL1067"/>
<dbReference type="EnsemblBacteria" id="AAN24875">
    <property type="protein sequence ID" value="AAN24875"/>
    <property type="gene ID" value="BL1067"/>
</dbReference>
<dbReference type="KEGG" id="blo:BL1067"/>
<dbReference type="PATRIC" id="fig|206672.9.peg.774"/>
<dbReference type="HOGENOM" id="CLU_025086_0_0_11"/>
<dbReference type="OrthoDB" id="9800719at2"/>
<dbReference type="PhylomeDB" id="Q8G5E7"/>
<dbReference type="Proteomes" id="UP000000439">
    <property type="component" value="Chromosome"/>
</dbReference>
<dbReference type="GO" id="GO:0005737">
    <property type="term" value="C:cytoplasm"/>
    <property type="evidence" value="ECO:0007669"/>
    <property type="project" value="UniProtKB-SubCell"/>
</dbReference>
<dbReference type="GO" id="GO:0005524">
    <property type="term" value="F:ATP binding"/>
    <property type="evidence" value="ECO:0007669"/>
    <property type="project" value="UniProtKB-UniRule"/>
</dbReference>
<dbReference type="GO" id="GO:0000287">
    <property type="term" value="F:magnesium ion binding"/>
    <property type="evidence" value="ECO:0007669"/>
    <property type="project" value="UniProtKB-UniRule"/>
</dbReference>
<dbReference type="GO" id="GO:0004826">
    <property type="term" value="F:phenylalanine-tRNA ligase activity"/>
    <property type="evidence" value="ECO:0007669"/>
    <property type="project" value="UniProtKB-UniRule"/>
</dbReference>
<dbReference type="GO" id="GO:0000049">
    <property type="term" value="F:tRNA binding"/>
    <property type="evidence" value="ECO:0007669"/>
    <property type="project" value="InterPro"/>
</dbReference>
<dbReference type="GO" id="GO:0006432">
    <property type="term" value="P:phenylalanyl-tRNA aminoacylation"/>
    <property type="evidence" value="ECO:0007669"/>
    <property type="project" value="UniProtKB-UniRule"/>
</dbReference>
<dbReference type="CDD" id="cd00496">
    <property type="entry name" value="PheRS_alpha_core"/>
    <property type="match status" value="1"/>
</dbReference>
<dbReference type="Gene3D" id="3.30.930.10">
    <property type="entry name" value="Bira Bifunctional Protein, Domain 2"/>
    <property type="match status" value="1"/>
</dbReference>
<dbReference type="HAMAP" id="MF_00281">
    <property type="entry name" value="Phe_tRNA_synth_alpha1"/>
    <property type="match status" value="1"/>
</dbReference>
<dbReference type="InterPro" id="IPR006195">
    <property type="entry name" value="aa-tRNA-synth_II"/>
</dbReference>
<dbReference type="InterPro" id="IPR045864">
    <property type="entry name" value="aa-tRNA-synth_II/BPL/LPL"/>
</dbReference>
<dbReference type="InterPro" id="IPR004529">
    <property type="entry name" value="Phe-tRNA-synth_IIc_asu"/>
</dbReference>
<dbReference type="InterPro" id="IPR004188">
    <property type="entry name" value="Phe-tRNA_ligase_II_N"/>
</dbReference>
<dbReference type="InterPro" id="IPR022911">
    <property type="entry name" value="Phe_tRNA_ligase_alpha1_bac"/>
</dbReference>
<dbReference type="InterPro" id="IPR002319">
    <property type="entry name" value="Phenylalanyl-tRNA_Synthase"/>
</dbReference>
<dbReference type="InterPro" id="IPR010978">
    <property type="entry name" value="tRNA-bd_arm"/>
</dbReference>
<dbReference type="NCBIfam" id="TIGR00468">
    <property type="entry name" value="pheS"/>
    <property type="match status" value="1"/>
</dbReference>
<dbReference type="PANTHER" id="PTHR11538:SF41">
    <property type="entry name" value="PHENYLALANINE--TRNA LIGASE, MITOCHONDRIAL"/>
    <property type="match status" value="1"/>
</dbReference>
<dbReference type="PANTHER" id="PTHR11538">
    <property type="entry name" value="PHENYLALANYL-TRNA SYNTHETASE"/>
    <property type="match status" value="1"/>
</dbReference>
<dbReference type="Pfam" id="PF02912">
    <property type="entry name" value="Phe_tRNA-synt_N"/>
    <property type="match status" value="1"/>
</dbReference>
<dbReference type="Pfam" id="PF01409">
    <property type="entry name" value="tRNA-synt_2d"/>
    <property type="match status" value="1"/>
</dbReference>
<dbReference type="SUPFAM" id="SSF55681">
    <property type="entry name" value="Class II aaRS and biotin synthetases"/>
    <property type="match status" value="1"/>
</dbReference>
<dbReference type="SUPFAM" id="SSF46589">
    <property type="entry name" value="tRNA-binding arm"/>
    <property type="match status" value="1"/>
</dbReference>
<dbReference type="PROSITE" id="PS50862">
    <property type="entry name" value="AA_TRNA_LIGASE_II"/>
    <property type="match status" value="1"/>
</dbReference>
<name>SYFA_BIFLO</name>
<comment type="catalytic activity">
    <reaction evidence="1">
        <text>tRNA(Phe) + L-phenylalanine + ATP = L-phenylalanyl-tRNA(Phe) + AMP + diphosphate + H(+)</text>
        <dbReference type="Rhea" id="RHEA:19413"/>
        <dbReference type="Rhea" id="RHEA-COMP:9668"/>
        <dbReference type="Rhea" id="RHEA-COMP:9699"/>
        <dbReference type="ChEBI" id="CHEBI:15378"/>
        <dbReference type="ChEBI" id="CHEBI:30616"/>
        <dbReference type="ChEBI" id="CHEBI:33019"/>
        <dbReference type="ChEBI" id="CHEBI:58095"/>
        <dbReference type="ChEBI" id="CHEBI:78442"/>
        <dbReference type="ChEBI" id="CHEBI:78531"/>
        <dbReference type="ChEBI" id="CHEBI:456215"/>
        <dbReference type="EC" id="6.1.1.20"/>
    </reaction>
</comment>
<comment type="cofactor">
    <cofactor evidence="1">
        <name>Mg(2+)</name>
        <dbReference type="ChEBI" id="CHEBI:18420"/>
    </cofactor>
    <text evidence="1">Binds 2 magnesium ions per tetramer.</text>
</comment>
<comment type="subunit">
    <text evidence="1">Tetramer of two alpha and two beta subunits.</text>
</comment>
<comment type="subcellular location">
    <subcellularLocation>
        <location evidence="1">Cytoplasm</location>
    </subcellularLocation>
</comment>
<comment type="similarity">
    <text evidence="1">Belongs to the class-II aminoacyl-tRNA synthetase family. Phe-tRNA synthetase alpha subunit type 1 subfamily.</text>
</comment>
<gene>
    <name evidence="1" type="primary">pheS</name>
    <name type="ordered locus">BL1067</name>
</gene>
<feature type="chain" id="PRO_0000126669" description="Phenylalanine--tRNA ligase alpha subunit">
    <location>
        <begin position="1"/>
        <end position="355"/>
    </location>
</feature>
<feature type="binding site" evidence="1">
    <location>
        <position position="273"/>
    </location>
    <ligand>
        <name>Mg(2+)</name>
        <dbReference type="ChEBI" id="CHEBI:18420"/>
        <note>shared with beta subunit</note>
    </ligand>
</feature>
<reference key="1">
    <citation type="journal article" date="2002" name="Proc. Natl. Acad. Sci. U.S.A.">
        <title>The genome sequence of Bifidobacterium longum reflects its adaptation to the human gastrointestinal tract.</title>
        <authorList>
            <person name="Schell M.A."/>
            <person name="Karmirantzou M."/>
            <person name="Snel B."/>
            <person name="Vilanova D."/>
            <person name="Berger B."/>
            <person name="Pessi G."/>
            <person name="Zwahlen M.-C."/>
            <person name="Desiere F."/>
            <person name="Bork P."/>
            <person name="Delley M."/>
            <person name="Pridmore R.D."/>
            <person name="Arigoni F."/>
        </authorList>
    </citation>
    <scope>NUCLEOTIDE SEQUENCE [LARGE SCALE GENOMIC DNA]</scope>
    <source>
        <strain>NCC 2705</strain>
    </source>
</reference>
<sequence length="355" mass="38873">MAEQMVFDADQVTAEVAEGIEKIQNASNLEELKAIKTTYAGADSAMTKASKAIGSLPADQKKEAGKLMGKLRADFGRAYGPKEVELKEAAEKAALAAETVDMTLPVSRKPLGARHPLPKLMEDVEDFFISMGWQISSGPEIEAEWYNFDSLNFGPDHPARQMQDTFYVKGNQAKDAAGFVGSNMVVRTQTSSDQVRALLTRGVPLYIASPGRVFRTDELDATHTPVFHQCEALAVDKHLTMADLKGVLDKLAVAMFGPEAKTRLRPSYFPFTEPSAELDLWFPDKKGGPGWLEWGGCGMVNPNVLKSAGIDPDVYTGFAFGVGMERTLLLRSDINDMHDLVEGDVRFAEQFVMGE</sequence>
<evidence type="ECO:0000255" key="1">
    <source>
        <dbReference type="HAMAP-Rule" id="MF_00281"/>
    </source>
</evidence>
<proteinExistence type="inferred from homology"/>
<keyword id="KW-0030">Aminoacyl-tRNA synthetase</keyword>
<keyword id="KW-0067">ATP-binding</keyword>
<keyword id="KW-0963">Cytoplasm</keyword>
<keyword id="KW-0436">Ligase</keyword>
<keyword id="KW-0460">Magnesium</keyword>
<keyword id="KW-0479">Metal-binding</keyword>
<keyword id="KW-0547">Nucleotide-binding</keyword>
<keyword id="KW-0648">Protein biosynthesis</keyword>
<keyword id="KW-1185">Reference proteome</keyword>
<organism>
    <name type="scientific">Bifidobacterium longum (strain NCC 2705)</name>
    <dbReference type="NCBI Taxonomy" id="206672"/>
    <lineage>
        <taxon>Bacteria</taxon>
        <taxon>Bacillati</taxon>
        <taxon>Actinomycetota</taxon>
        <taxon>Actinomycetes</taxon>
        <taxon>Bifidobacteriales</taxon>
        <taxon>Bifidobacteriaceae</taxon>
        <taxon>Bifidobacterium</taxon>
    </lineage>
</organism>
<accession>Q8G5E7</accession>
<protein>
    <recommendedName>
        <fullName evidence="1">Phenylalanine--tRNA ligase alpha subunit</fullName>
        <ecNumber evidence="1">6.1.1.20</ecNumber>
    </recommendedName>
    <alternativeName>
        <fullName evidence="1">Phenylalanyl-tRNA synthetase alpha subunit</fullName>
        <shortName evidence="1">PheRS</shortName>
    </alternativeName>
</protein>